<proteinExistence type="inferred from homology"/>
<evidence type="ECO:0000255" key="1">
    <source>
        <dbReference type="HAMAP-Rule" id="MF_00376"/>
    </source>
</evidence>
<keyword id="KW-0067">ATP-binding</keyword>
<keyword id="KW-0173">Coenzyme A biosynthesis</keyword>
<keyword id="KW-0963">Cytoplasm</keyword>
<keyword id="KW-0418">Kinase</keyword>
<keyword id="KW-0547">Nucleotide-binding</keyword>
<keyword id="KW-1185">Reference proteome</keyword>
<keyword id="KW-0808">Transferase</keyword>
<organism>
    <name type="scientific">Clostridium tetani (strain Massachusetts / E88)</name>
    <dbReference type="NCBI Taxonomy" id="212717"/>
    <lineage>
        <taxon>Bacteria</taxon>
        <taxon>Bacillati</taxon>
        <taxon>Bacillota</taxon>
        <taxon>Clostridia</taxon>
        <taxon>Eubacteriales</taxon>
        <taxon>Clostridiaceae</taxon>
        <taxon>Clostridium</taxon>
    </lineage>
</organism>
<protein>
    <recommendedName>
        <fullName evidence="1">Dephospho-CoA kinase</fullName>
        <ecNumber evidence="1">2.7.1.24</ecNumber>
    </recommendedName>
    <alternativeName>
        <fullName evidence="1">Dephosphocoenzyme A kinase</fullName>
    </alternativeName>
</protein>
<comment type="function">
    <text evidence="1">Catalyzes the phosphorylation of the 3'-hydroxyl group of dephosphocoenzyme A to form coenzyme A.</text>
</comment>
<comment type="catalytic activity">
    <reaction evidence="1">
        <text>3'-dephospho-CoA + ATP = ADP + CoA + H(+)</text>
        <dbReference type="Rhea" id="RHEA:18245"/>
        <dbReference type="ChEBI" id="CHEBI:15378"/>
        <dbReference type="ChEBI" id="CHEBI:30616"/>
        <dbReference type="ChEBI" id="CHEBI:57287"/>
        <dbReference type="ChEBI" id="CHEBI:57328"/>
        <dbReference type="ChEBI" id="CHEBI:456216"/>
        <dbReference type="EC" id="2.7.1.24"/>
    </reaction>
</comment>
<comment type="pathway">
    <text evidence="1">Cofactor biosynthesis; coenzyme A biosynthesis; CoA from (R)-pantothenate: step 5/5.</text>
</comment>
<comment type="subcellular location">
    <subcellularLocation>
        <location evidence="1">Cytoplasm</location>
    </subcellularLocation>
</comment>
<comment type="similarity">
    <text evidence="1">Belongs to the CoaE family.</text>
</comment>
<name>COAE_CLOTE</name>
<reference key="1">
    <citation type="journal article" date="2003" name="Proc. Natl. Acad. Sci. U.S.A.">
        <title>The genome sequence of Clostridium tetani, the causative agent of tetanus disease.</title>
        <authorList>
            <person name="Brueggemann H."/>
            <person name="Baeumer S."/>
            <person name="Fricke W.F."/>
            <person name="Wiezer A."/>
            <person name="Liesegang H."/>
            <person name="Decker I."/>
            <person name="Herzberg C."/>
            <person name="Martinez-Arias R."/>
            <person name="Merkl R."/>
            <person name="Henne A."/>
            <person name="Gottschalk G."/>
        </authorList>
    </citation>
    <scope>NUCLEOTIDE SEQUENCE [LARGE SCALE GENOMIC DNA]</scope>
    <source>
        <strain>Massachusetts / E88</strain>
    </source>
</reference>
<feature type="chain" id="PRO_0000172932" description="Dephospho-CoA kinase">
    <location>
        <begin position="1"/>
        <end position="227"/>
    </location>
</feature>
<feature type="domain" description="DPCK" evidence="1">
    <location>
        <begin position="31"/>
        <end position="227"/>
    </location>
</feature>
<feature type="binding site" evidence="1">
    <location>
        <begin position="39"/>
        <end position="44"/>
    </location>
    <ligand>
        <name>ATP</name>
        <dbReference type="ChEBI" id="CHEBI:30616"/>
    </ligand>
</feature>
<sequence length="227" mass="26611">MKEKIGMMLSDVDLEWLKKKYCIKNKGKFLKIGLTGGIGSGKSTISKMFKNMGIDVIDADKIAREVLEKYPPILEYIEENFGEQYIDEFGNLNRREFGNHIFSISKKEREKYENIIIPYIKLEIENQFKLYEKIGKKVCLLDAPLLIEQDMQKDLDFTVLSWVNKETQIKRVGIRDNLSEDEILNRIEAQISLDKKRELVDFIIDNSNTIEETRVQVEKLFQFINCL</sequence>
<gene>
    <name evidence="1" type="primary">coaE</name>
    <name type="ordered locus">CTC_02101</name>
</gene>
<dbReference type="EC" id="2.7.1.24" evidence="1"/>
<dbReference type="EMBL" id="AE015927">
    <property type="protein sequence ID" value="AAO36600.1"/>
    <property type="molecule type" value="Genomic_DNA"/>
</dbReference>
<dbReference type="SMR" id="Q892J5"/>
<dbReference type="STRING" id="212717.CTC_02101"/>
<dbReference type="KEGG" id="ctc:CTC_02101"/>
<dbReference type="HOGENOM" id="CLU_057180_0_0_9"/>
<dbReference type="OrthoDB" id="9812943at2"/>
<dbReference type="UniPathway" id="UPA00241">
    <property type="reaction ID" value="UER00356"/>
</dbReference>
<dbReference type="Proteomes" id="UP000001412">
    <property type="component" value="Chromosome"/>
</dbReference>
<dbReference type="GO" id="GO:0005737">
    <property type="term" value="C:cytoplasm"/>
    <property type="evidence" value="ECO:0007669"/>
    <property type="project" value="UniProtKB-SubCell"/>
</dbReference>
<dbReference type="GO" id="GO:0005524">
    <property type="term" value="F:ATP binding"/>
    <property type="evidence" value="ECO:0007669"/>
    <property type="project" value="UniProtKB-UniRule"/>
</dbReference>
<dbReference type="GO" id="GO:0004140">
    <property type="term" value="F:dephospho-CoA kinase activity"/>
    <property type="evidence" value="ECO:0007669"/>
    <property type="project" value="UniProtKB-UniRule"/>
</dbReference>
<dbReference type="GO" id="GO:0015937">
    <property type="term" value="P:coenzyme A biosynthetic process"/>
    <property type="evidence" value="ECO:0007669"/>
    <property type="project" value="UniProtKB-UniRule"/>
</dbReference>
<dbReference type="CDD" id="cd02022">
    <property type="entry name" value="DPCK"/>
    <property type="match status" value="1"/>
</dbReference>
<dbReference type="Gene3D" id="3.40.50.300">
    <property type="entry name" value="P-loop containing nucleotide triphosphate hydrolases"/>
    <property type="match status" value="1"/>
</dbReference>
<dbReference type="HAMAP" id="MF_00376">
    <property type="entry name" value="Dephospho_CoA_kinase"/>
    <property type="match status" value="1"/>
</dbReference>
<dbReference type="InterPro" id="IPR001977">
    <property type="entry name" value="Depp_CoAkinase"/>
</dbReference>
<dbReference type="InterPro" id="IPR027417">
    <property type="entry name" value="P-loop_NTPase"/>
</dbReference>
<dbReference type="NCBIfam" id="TIGR00152">
    <property type="entry name" value="dephospho-CoA kinase"/>
    <property type="match status" value="1"/>
</dbReference>
<dbReference type="PANTHER" id="PTHR10695:SF46">
    <property type="entry name" value="BIFUNCTIONAL COENZYME A SYNTHASE-RELATED"/>
    <property type="match status" value="1"/>
</dbReference>
<dbReference type="PANTHER" id="PTHR10695">
    <property type="entry name" value="DEPHOSPHO-COA KINASE-RELATED"/>
    <property type="match status" value="1"/>
</dbReference>
<dbReference type="Pfam" id="PF01121">
    <property type="entry name" value="CoaE"/>
    <property type="match status" value="1"/>
</dbReference>
<dbReference type="SUPFAM" id="SSF52540">
    <property type="entry name" value="P-loop containing nucleoside triphosphate hydrolases"/>
    <property type="match status" value="1"/>
</dbReference>
<dbReference type="PROSITE" id="PS51219">
    <property type="entry name" value="DPCK"/>
    <property type="match status" value="1"/>
</dbReference>
<accession>Q892J5</accession>